<reference key="1">
    <citation type="journal article" date="2004" name="Genome Res.">
        <title>The status, quality, and expansion of the NIH full-length cDNA project: the Mammalian Gene Collection (MGC).</title>
        <authorList>
            <consortium name="The MGC Project Team"/>
        </authorList>
    </citation>
    <scope>NUCLEOTIDE SEQUENCE [LARGE SCALE MRNA]</scope>
    <source>
        <strain>FVB/N</strain>
        <tissue>Eye</tissue>
        <tissue>Kidney</tissue>
    </source>
</reference>
<reference key="2">
    <citation type="journal article" date="2010" name="Am. J. Hum. Genet.">
        <title>Nonsense mutations in FAM161A cause RP28-associated recessive retinitis pigmentosa.</title>
        <authorList>
            <person name="Langmann T."/>
            <person name="Di Gioia S.A."/>
            <person name="Rau I."/>
            <person name="Stohr H."/>
            <person name="Maksimovic N.S."/>
            <person name="Corbo J.C."/>
            <person name="Renner A.B."/>
            <person name="Zrenner E."/>
            <person name="Kumaramanickavel G."/>
            <person name="Karlstetter M."/>
            <person name="Arsenijevic Y."/>
            <person name="Weber B.H."/>
            <person name="Gal A."/>
            <person name="Rivolta C."/>
        </authorList>
    </citation>
    <scope>TISSUE SPECIFICITY</scope>
    <scope>DEVELOPMENTAL STAGE</scope>
</reference>
<reference key="3">
    <citation type="journal article" date="2010" name="Am. J. Hum. Genet.">
        <title>Homozygosity mapping reveals null mutations in FAM161A as a cause of autosomal-recessive retinitis pigmentosa.</title>
        <authorList>
            <person name="Bandah-Rozenfeld D."/>
            <person name="Mizrahi-Meissonnier L."/>
            <person name="Farhy C."/>
            <person name="Obolensky A."/>
            <person name="Chowers I."/>
            <person name="Pe'er J."/>
            <person name="Merin S."/>
            <person name="Ben-Yosef T."/>
            <person name="Ashery-Padan R."/>
            <person name="Banin E."/>
            <person name="Sharon D."/>
        </authorList>
    </citation>
    <scope>TISSUE SPECIFICITY</scope>
    <scope>DEVELOPMENTAL STAGE</scope>
</reference>
<reference key="4">
    <citation type="journal article" date="2012" name="Hum. Mol. Genet.">
        <title>FAM161A, associated with retinitis pigmentosa, is a component of the cilia-basal body complex and interacts with proteins involved in ciliopathies.</title>
        <authorList>
            <person name="Di Gioia S.A."/>
            <person name="Letteboer S.J."/>
            <person name="Kostic C."/>
            <person name="Bandah-Rozenfeld D."/>
            <person name="Hetterschijt L."/>
            <person name="Sharon D."/>
            <person name="Arsenijevic Y."/>
            <person name="Roepman R."/>
            <person name="Rivolta C."/>
        </authorList>
    </citation>
    <scope>SUBCELLULAR LOCATION</scope>
</reference>
<reference key="5">
    <citation type="journal article" date="2012" name="Hum. Mol. Genet.">
        <title>The retinitis pigmentosa 28 protein FAM161A is a novel ciliary protein involved in intermolecular protein interaction and microtubule association.</title>
        <authorList>
            <person name="Zach F."/>
            <person name="Grassmann F."/>
            <person name="Langmann T."/>
            <person name="Sorusch N."/>
            <person name="Wolfrum U."/>
            <person name="Stohr H."/>
        </authorList>
    </citation>
    <scope>SUBCELLULAR LOCATION</scope>
</reference>
<gene>
    <name evidence="9" type="primary">Fam161a</name>
</gene>
<sequence>MNFSDIYHSDEEYFRKLKDLKAVHEETMSKLEKMYQDKLNIKDIQAGFIRDGISDSSSSSASEKSCSHPALSVTSLSEPDLDGSSSLSTTTDEGLPDLEEKTPGESSAMVHAQELINNMWNDFSVEDYIQYDSDSRTAKKKRKKAKSLTPKITVPVPFEMTVREQNRREKALSARSDLETKLLKRDEDDAECKKKFRANPVPSCVLLPLYEDLVKQSEERRKKARERNRAALLASLKPFKFIAREEQKQAVREKKLRDLFRAKRKTNQFKAKPVPRFIYRPAASDKPKEEELYGDSRMLPKVRDLLQNSPWPSRSACRRFRDPRSPAKPRGKHRRRCLRRDGDLEKWKEPFSEYSFLKCPMLCEECCLHESPCDSDKRQKLLADIRADEEILRETRRPGRSPRRKSPGRSSNPKPRPHECSPPMPTASSRGREQAIRRSEKARMREYWQELEEQEEKLQKRPMLFERVTQVVFIG</sequence>
<evidence type="ECO:0000250" key="1">
    <source>
        <dbReference type="UniProtKB" id="Q3B820"/>
    </source>
</evidence>
<evidence type="ECO:0000255" key="2"/>
<evidence type="ECO:0000256" key="3">
    <source>
        <dbReference type="SAM" id="MobiDB-lite"/>
    </source>
</evidence>
<evidence type="ECO:0000269" key="4">
    <source>
    </source>
</evidence>
<evidence type="ECO:0000269" key="5">
    <source>
    </source>
</evidence>
<evidence type="ECO:0000269" key="6">
    <source>
    </source>
</evidence>
<evidence type="ECO:0000269" key="7">
    <source>
    </source>
</evidence>
<evidence type="ECO:0000305" key="8"/>
<evidence type="ECO:0000312" key="9">
    <source>
        <dbReference type="MGI" id="MGI:1921123"/>
    </source>
</evidence>
<accession>Q8QZV6</accession>
<keyword id="KW-0966">Cell projection</keyword>
<keyword id="KW-0969">Cilium</keyword>
<keyword id="KW-0970">Cilium biogenesis/degradation</keyword>
<keyword id="KW-0175">Coiled coil</keyword>
<keyword id="KW-0963">Cytoplasm</keyword>
<keyword id="KW-0206">Cytoskeleton</keyword>
<keyword id="KW-1017">Isopeptide bond</keyword>
<keyword id="KW-1185">Reference proteome</keyword>
<keyword id="KW-0832">Ubl conjugation</keyword>
<protein>
    <recommendedName>
        <fullName evidence="8">Protein FAM161A</fullName>
    </recommendedName>
</protein>
<organism>
    <name type="scientific">Mus musculus</name>
    <name type="common">Mouse</name>
    <dbReference type="NCBI Taxonomy" id="10090"/>
    <lineage>
        <taxon>Eukaryota</taxon>
        <taxon>Metazoa</taxon>
        <taxon>Chordata</taxon>
        <taxon>Craniata</taxon>
        <taxon>Vertebrata</taxon>
        <taxon>Euteleostomi</taxon>
        <taxon>Mammalia</taxon>
        <taxon>Eutheria</taxon>
        <taxon>Euarchontoglires</taxon>
        <taxon>Glires</taxon>
        <taxon>Rodentia</taxon>
        <taxon>Myomorpha</taxon>
        <taxon>Muroidea</taxon>
        <taxon>Muridae</taxon>
        <taxon>Murinae</taxon>
        <taxon>Mus</taxon>
        <taxon>Mus</taxon>
    </lineage>
</organism>
<dbReference type="EMBL" id="BC024460">
    <property type="protein sequence ID" value="AAH24460.1"/>
    <property type="status" value="ALT_INIT"/>
    <property type="molecule type" value="mRNA"/>
</dbReference>
<dbReference type="EMBL" id="BC026495">
    <property type="protein sequence ID" value="AAH26495.1"/>
    <property type="status" value="ALT_INIT"/>
    <property type="molecule type" value="mRNA"/>
</dbReference>
<dbReference type="CCDS" id="CCDS48757.1"/>
<dbReference type="RefSeq" id="NP_001350212.1">
    <property type="nucleotide sequence ID" value="NM_001363283.2"/>
</dbReference>
<dbReference type="RefSeq" id="NP_001350213.1">
    <property type="nucleotide sequence ID" value="NM_001363284.2"/>
</dbReference>
<dbReference type="RefSeq" id="NP_001395272.1">
    <property type="nucleotide sequence ID" value="NM_001408343.1"/>
</dbReference>
<dbReference type="RefSeq" id="NP_001395273.1">
    <property type="nucleotide sequence ID" value="NM_001408344.1"/>
</dbReference>
<dbReference type="RefSeq" id="NP_001395274.1">
    <property type="nucleotide sequence ID" value="NM_001408345.1"/>
</dbReference>
<dbReference type="RefSeq" id="NP_001395275.1">
    <property type="nucleotide sequence ID" value="NM_001408346.1"/>
</dbReference>
<dbReference type="RefSeq" id="NP_082948.2">
    <property type="nucleotide sequence ID" value="NM_028672.4"/>
</dbReference>
<dbReference type="RefSeq" id="XP_006514902.1">
    <property type="nucleotide sequence ID" value="XM_006514839.1"/>
</dbReference>
<dbReference type="SMR" id="Q8QZV6"/>
<dbReference type="FunCoup" id="Q8QZV6">
    <property type="interactions" value="329"/>
</dbReference>
<dbReference type="STRING" id="10090.ENSMUSP00000158891"/>
<dbReference type="GlyGen" id="Q8QZV6">
    <property type="glycosylation" value="1 site"/>
</dbReference>
<dbReference type="PhosphoSitePlus" id="Q8QZV6"/>
<dbReference type="PaxDb" id="10090-ENSMUSP00000063091"/>
<dbReference type="ProteomicsDB" id="271825"/>
<dbReference type="Antibodypedia" id="30688">
    <property type="antibodies" value="74 antibodies from 10 providers"/>
</dbReference>
<dbReference type="DNASU" id="73873"/>
<dbReference type="Ensembl" id="ENSMUST00000238880.2">
    <property type="protein sequence ID" value="ENSMUSP00000158891.2"/>
    <property type="gene ID" value="ENSMUSG00000049811.18"/>
</dbReference>
<dbReference type="GeneID" id="73873"/>
<dbReference type="KEGG" id="mmu:73873"/>
<dbReference type="UCSC" id="uc007ies.1">
    <property type="organism name" value="mouse"/>
</dbReference>
<dbReference type="AGR" id="MGI:1921123"/>
<dbReference type="CTD" id="84140"/>
<dbReference type="MGI" id="MGI:1921123">
    <property type="gene designation" value="Fam161a"/>
</dbReference>
<dbReference type="VEuPathDB" id="HostDB:ENSMUSG00000049811"/>
<dbReference type="eggNOG" id="ENOG502QRC3">
    <property type="taxonomic scope" value="Eukaryota"/>
</dbReference>
<dbReference type="GeneTree" id="ENSGT00940000157824"/>
<dbReference type="InParanoid" id="Q8QZV6"/>
<dbReference type="OMA" id="EVTECQR"/>
<dbReference type="BioGRID-ORCS" id="73873">
    <property type="hits" value="2 hits in 76 CRISPR screens"/>
</dbReference>
<dbReference type="PRO" id="PR:Q8QZV6"/>
<dbReference type="Proteomes" id="UP000000589">
    <property type="component" value="Chromosome 11"/>
</dbReference>
<dbReference type="RNAct" id="Q8QZV6">
    <property type="molecule type" value="protein"/>
</dbReference>
<dbReference type="Bgee" id="ENSMUSG00000049811">
    <property type="expression patterns" value="Expressed in retinal neural layer and 219 other cell types or tissues"/>
</dbReference>
<dbReference type="ExpressionAtlas" id="Q8QZV6">
    <property type="expression patterns" value="baseline and differential"/>
</dbReference>
<dbReference type="GO" id="GO:0005814">
    <property type="term" value="C:centriole"/>
    <property type="evidence" value="ECO:0000314"/>
    <property type="project" value="UniProtKB"/>
</dbReference>
<dbReference type="GO" id="GO:0036064">
    <property type="term" value="C:ciliary basal body"/>
    <property type="evidence" value="ECO:0000314"/>
    <property type="project" value="UniProtKB"/>
</dbReference>
<dbReference type="GO" id="GO:0005737">
    <property type="term" value="C:cytoplasm"/>
    <property type="evidence" value="ECO:0007669"/>
    <property type="project" value="UniProtKB-KW"/>
</dbReference>
<dbReference type="GO" id="GO:0097733">
    <property type="term" value="C:photoreceptor cell cilium"/>
    <property type="evidence" value="ECO:0000314"/>
    <property type="project" value="UniProtKB"/>
</dbReference>
<dbReference type="GO" id="GO:0032391">
    <property type="term" value="C:photoreceptor connecting cilium"/>
    <property type="evidence" value="ECO:0000314"/>
    <property type="project" value="UniProtKB"/>
</dbReference>
<dbReference type="GO" id="GO:0001917">
    <property type="term" value="C:photoreceptor inner segment"/>
    <property type="evidence" value="ECO:0000314"/>
    <property type="project" value="UniProtKB"/>
</dbReference>
<dbReference type="GO" id="GO:0060271">
    <property type="term" value="P:cilium assembly"/>
    <property type="evidence" value="ECO:0000250"/>
    <property type="project" value="UniProtKB"/>
</dbReference>
<dbReference type="GO" id="GO:0044782">
    <property type="term" value="P:cilium organization"/>
    <property type="evidence" value="ECO:0000315"/>
    <property type="project" value="MGI"/>
</dbReference>
<dbReference type="InterPro" id="IPR051655">
    <property type="entry name" value="FAM161"/>
</dbReference>
<dbReference type="InterPro" id="IPR019579">
    <property type="entry name" value="FAM161A/B"/>
</dbReference>
<dbReference type="PANTHER" id="PTHR21501">
    <property type="entry name" value="PROTEIN FAM-161"/>
    <property type="match status" value="1"/>
</dbReference>
<dbReference type="PANTHER" id="PTHR21501:SF3">
    <property type="entry name" value="PROTEIN FAM161A"/>
    <property type="match status" value="1"/>
</dbReference>
<dbReference type="Pfam" id="PF10595">
    <property type="entry name" value="FAM161A_B"/>
    <property type="match status" value="1"/>
</dbReference>
<comment type="function">
    <text evidence="1">Involved in ciliogenesis.</text>
</comment>
<comment type="subunit">
    <text evidence="1">Interacts (via central region) with CFAP418 (via N-terminus); the interaction is direct (By similarity). Interacts (via C-terminus) with microtubules (By similarity). Interacts with LCA5 (By similarity). Interacts with CEP290 (By similarity). Interacts with SDCCAG8 (By similarity). Interacts with FAM161B (By similarity). Interacts with POC1B (By similarity). Interacts with CEP78 (By similarity). Forms a microtubule-associated complex with POC5, CETN2 and POC1B (By similarity). Interacts with CCDC15 (By similarity).</text>
</comment>
<comment type="subcellular location">
    <subcellularLocation>
        <location evidence="6 7">Cytoplasm</location>
        <location evidence="6 7">Cytoskeleton</location>
        <location evidence="6 7">Cilium basal body</location>
    </subcellularLocation>
    <subcellularLocation>
        <location evidence="6 7">Cell projection</location>
        <location evidence="6 7">Cilium</location>
    </subcellularLocation>
    <subcellularLocation>
        <location evidence="6">Cytoplasm</location>
        <location evidence="6">Cytoskeleton</location>
        <location evidence="6">Microtubule organizing center</location>
        <location evidence="6">Centrosome</location>
        <location evidence="6">Centriole</location>
    </subcellularLocation>
    <text evidence="1">Localized in the region between the outer and inner photoreceptor segments, corresponding to the photoreceptor connecting cilium. Localizes to the inner scaffold in the central region of centrioles.</text>
</comment>
<comment type="tissue specificity">
    <text evidence="4 5">Expressed in the retina.</text>
</comment>
<comment type="developmental stage">
    <text evidence="4 5">Expressed at low levels from 12.5 to 16.5 dpc in the retinal progenitor cells of the optic cup, as well as in the posterior compartment of the lens. Expression drops in the retina at birth. At P5, highly expressed in the postmigratory photoreceptor precursors at the apical side of the outer nuclear layer. At P10, present in the outer nuclear layer and in the inner segments of photoreceptors and in the outer plexiform layer (at protein level). In adult animals, at P30, reaches a well-defined localization in the inner segment of photoreceptors, as well as in the outer plexiform layer (at protein level). Completely absent from the outer segment of photoreceptors (at protein level).</text>
</comment>
<comment type="similarity">
    <text evidence="8">Belongs to the FAM161 family.</text>
</comment>
<comment type="sequence caution" evidence="8">
    <conflict type="erroneous initiation">
        <sequence resource="EMBL-CDS" id="AAH24460"/>
    </conflict>
    <text>Truncated N-terminus.</text>
</comment>
<comment type="sequence caution" evidence="8">
    <conflict type="erroneous initiation">
        <sequence resource="EMBL-CDS" id="AAH26495"/>
    </conflict>
    <text>Truncated N-terminus.</text>
</comment>
<proteinExistence type="evidence at protein level"/>
<feature type="chain" id="PRO_0000329053" description="Protein FAM161A">
    <location>
        <begin position="1"/>
        <end position="475"/>
    </location>
</feature>
<feature type="region of interest" description="Disordered" evidence="3">
    <location>
        <begin position="53"/>
        <end position="107"/>
    </location>
</feature>
<feature type="region of interest" description="Required for interaction with CFAP418" evidence="1">
    <location>
        <begin position="255"/>
        <end position="434"/>
    </location>
</feature>
<feature type="region of interest" description="Disordered" evidence="3">
    <location>
        <begin position="314"/>
        <end position="337"/>
    </location>
</feature>
<feature type="region of interest" description="Disordered" evidence="3">
    <location>
        <begin position="389"/>
        <end position="441"/>
    </location>
</feature>
<feature type="coiled-coil region" evidence="2">
    <location>
        <begin position="162"/>
        <end position="234"/>
    </location>
</feature>
<feature type="compositionally biased region" description="Low complexity" evidence="3">
    <location>
        <begin position="54"/>
        <end position="64"/>
    </location>
</feature>
<feature type="compositionally biased region" description="Low complexity" evidence="3">
    <location>
        <begin position="82"/>
        <end position="93"/>
    </location>
</feature>
<feature type="compositionally biased region" description="Basic residues" evidence="3">
    <location>
        <begin position="327"/>
        <end position="337"/>
    </location>
</feature>
<feature type="compositionally biased region" description="Basic residues" evidence="3">
    <location>
        <begin position="398"/>
        <end position="407"/>
    </location>
</feature>
<feature type="compositionally biased region" description="Basic and acidic residues" evidence="3">
    <location>
        <begin position="430"/>
        <end position="441"/>
    </location>
</feature>
<feature type="cross-link" description="Glycyl lysine isopeptide (Lys-Gly) (interchain with G-Cter in SUMO2)" evidence="1">
    <location>
        <position position="377"/>
    </location>
</feature>
<name>F161A_MOUSE</name>